<evidence type="ECO:0000250" key="1"/>
<evidence type="ECO:0000269" key="2">
    <source>
    </source>
</evidence>
<evidence type="ECO:0000305" key="3"/>
<proteinExistence type="evidence at protein level"/>
<organism>
    <name type="scientific">Lacticaseibacillus paracasei (strain ATCC 334 / BCRC 17002 / CCUG 31169 / CIP 107868 / KCTC 3260 / NRRL B-441)</name>
    <name type="common">Lactobacillus paracasei</name>
    <dbReference type="NCBI Taxonomy" id="321967"/>
    <lineage>
        <taxon>Bacteria</taxon>
        <taxon>Bacillati</taxon>
        <taxon>Bacillota</taxon>
        <taxon>Bacilli</taxon>
        <taxon>Lactobacillales</taxon>
        <taxon>Lactobacillaceae</taxon>
        <taxon>Lacticaseibacillus</taxon>
    </lineage>
</organism>
<accession>Q03C44</accession>
<keyword id="KW-0119">Carbohydrate metabolism</keyword>
<keyword id="KW-0170">Cobalt</keyword>
<keyword id="KW-0903">Direct protein sequencing</keyword>
<keyword id="KW-0326">Glycosidase</keyword>
<keyword id="KW-0378">Hydrolase</keyword>
<keyword id="KW-0408">Iron</keyword>
<keyword id="KW-0464">Manganese</keyword>
<keyword id="KW-0479">Metal-binding</keyword>
<keyword id="KW-0520">NAD</keyword>
<keyword id="KW-0533">Nickel</keyword>
<keyword id="KW-1185">Reference proteome</keyword>
<name>PAGL1_LACP3</name>
<gene>
    <name type="primary">simA</name>
    <name type="ordered locus">LSEI_0369</name>
</gene>
<sequence>MDDRKFSVLIAGGGSTYTPGIVLTLLDHIQKFPLRKLKFYDIDGERQQRVADACEILVKERAPEVEFLATTDPEEAFTDVDFVMAQIRVGKYAMRSLDEKIPLKHGVVGQETTGPGGIAYGLRSIPGVIGLVDYMEKYSPNAWMLNYSNPAAIVAEATRRLRPHSRIINICDMPIGIMDRMAQIVGLKDRNDLVFRYYGLNHFGWWTDVRDKTGKDLMPALKQYVAKNGYWLGDKDKDTEASWVSTFKKAADVYALDPSTLPNTYLKYYLYPKYVVEHSDPNYTRTDEVEAYREKHVFDECDRIIAAGTAADTHFKSDDHATYIVDLCTAIAYDTKQRMLAIVPNDGAIENIDPEAMVEVPCLFGANGAERLAMGKAATFQKGLITEQNCVEKLTVDAFEQQSYTKLWEAMSLCKIVPDASVAKEILDEMVVANKDYWPELK</sequence>
<reference key="1">
    <citation type="journal article" date="2006" name="Proc. Natl. Acad. Sci. U.S.A.">
        <title>Comparative genomics of the lactic acid bacteria.</title>
        <authorList>
            <person name="Makarova K.S."/>
            <person name="Slesarev A."/>
            <person name="Wolf Y.I."/>
            <person name="Sorokin A."/>
            <person name="Mirkin B."/>
            <person name="Koonin E.V."/>
            <person name="Pavlov A."/>
            <person name="Pavlova N."/>
            <person name="Karamychev V."/>
            <person name="Polouchine N."/>
            <person name="Shakhova V."/>
            <person name="Grigoriev I."/>
            <person name="Lou Y."/>
            <person name="Rohksar D."/>
            <person name="Lucas S."/>
            <person name="Huang K."/>
            <person name="Goodstein D.M."/>
            <person name="Hawkins T."/>
            <person name="Plengvidhya V."/>
            <person name="Welker D."/>
            <person name="Hughes J."/>
            <person name="Goh Y."/>
            <person name="Benson A."/>
            <person name="Baldwin K."/>
            <person name="Lee J.-H."/>
            <person name="Diaz-Muniz I."/>
            <person name="Dosti B."/>
            <person name="Smeianov V."/>
            <person name="Wechter W."/>
            <person name="Barabote R."/>
            <person name="Lorca G."/>
            <person name="Altermann E."/>
            <person name="Barrangou R."/>
            <person name="Ganesan B."/>
            <person name="Xie Y."/>
            <person name="Rawsthorne H."/>
            <person name="Tamir D."/>
            <person name="Parker C."/>
            <person name="Breidt F."/>
            <person name="Broadbent J.R."/>
            <person name="Hutkins R."/>
            <person name="O'Sullivan D."/>
            <person name="Steele J."/>
            <person name="Unlu G."/>
            <person name="Saier M.H. Jr."/>
            <person name="Klaenhammer T."/>
            <person name="Richardson P."/>
            <person name="Kozyavkin S."/>
            <person name="Weimer B.C."/>
            <person name="Mills D.A."/>
        </authorList>
    </citation>
    <scope>NUCLEOTIDE SEQUENCE [LARGE SCALE GENOMIC DNA]</scope>
    <source>
        <strain>ATCC 334 / BCRC 17002 / CCUG 31169 / CIP 107868 / KCTC 3260 / NRRL B-441</strain>
    </source>
</reference>
<reference key="2">
    <citation type="journal article" date="2008" name="J. Bacteriol.">
        <title>The sim operon facilitates the transport and metabolism of sucrose isomers in Lactobacillus casei ATCC 334.</title>
        <authorList>
            <person name="Thompson J."/>
            <person name="Jakubovics N."/>
            <person name="Abraham B."/>
            <person name="Hess S."/>
            <person name="Pikis A."/>
        </authorList>
    </citation>
    <scope>PROTEIN SEQUENCE OF 1-30</scope>
    <scope>IDENTIFICATION BY MASS SPECTROMETRY</scope>
    <scope>CATALYTIC ACTIVITY</scope>
    <scope>FUNCTION</scope>
    <scope>SUBUNIT</scope>
    <scope>ACTIVITY REGULATION</scope>
    <scope>SUBSTRATE SPECIFICITY</scope>
    <scope>COFACTOR</scope>
    <scope>CATALYTIC MECHANISM</scope>
    <scope>INDUCTION</scope>
</reference>
<feature type="chain" id="PRO_0000389204" description="6-phospho-alpha-glucosidase 1">
    <location>
        <begin position="1"/>
        <end position="442"/>
    </location>
</feature>
<feature type="active site" description="Proton donor" evidence="3">
    <location>
        <position position="172"/>
    </location>
</feature>
<feature type="active site" description="Proton acceptor" evidence="3">
    <location>
        <position position="265"/>
    </location>
</feature>
<feature type="binding site" evidence="1">
    <location>
        <begin position="6"/>
        <end position="72"/>
    </location>
    <ligand>
        <name>NAD(+)</name>
        <dbReference type="ChEBI" id="CHEBI:57540"/>
    </ligand>
</feature>
<feature type="binding site" evidence="1">
    <location>
        <position position="95"/>
    </location>
    <ligand>
        <name>substrate</name>
    </ligand>
</feature>
<feature type="binding site" evidence="1">
    <location>
        <position position="149"/>
    </location>
    <ligand>
        <name>substrate</name>
    </ligand>
</feature>
<feature type="binding site" evidence="1">
    <location>
        <position position="171"/>
    </location>
    <ligand>
        <name>Mn(2+)</name>
        <dbReference type="ChEBI" id="CHEBI:29035"/>
    </ligand>
</feature>
<feature type="binding site" evidence="1">
    <location>
        <position position="202"/>
    </location>
    <ligand>
        <name>Mn(2+)</name>
        <dbReference type="ChEBI" id="CHEBI:29035"/>
    </ligand>
</feature>
<feature type="binding site" evidence="1">
    <location>
        <position position="285"/>
    </location>
    <ligand>
        <name>substrate</name>
    </ligand>
</feature>
<feature type="site" description="Increases basicity of active site Tyr" evidence="1">
    <location>
        <position position="111"/>
    </location>
</feature>
<dbReference type="EC" id="3.2.1.122"/>
<dbReference type="EMBL" id="CP000423">
    <property type="protein sequence ID" value="ABJ69228.1"/>
    <property type="molecule type" value="Genomic_DNA"/>
</dbReference>
<dbReference type="RefSeq" id="WP_011674086.1">
    <property type="nucleotide sequence ID" value="NC_008526.1"/>
</dbReference>
<dbReference type="RefSeq" id="YP_805670.1">
    <property type="nucleotide sequence ID" value="NC_008526.1"/>
</dbReference>
<dbReference type="SMR" id="Q03C44"/>
<dbReference type="STRING" id="321967.LSEI_0369"/>
<dbReference type="CAZy" id="GH4">
    <property type="family name" value="Glycoside Hydrolase Family 4"/>
</dbReference>
<dbReference type="PaxDb" id="321967-LSEI_0369"/>
<dbReference type="KEGG" id="lca:LSEI_0369"/>
<dbReference type="PATRIC" id="fig|321967.11.peg.390"/>
<dbReference type="HOGENOM" id="CLU_045951_2_0_9"/>
<dbReference type="Proteomes" id="UP000001651">
    <property type="component" value="Chromosome"/>
</dbReference>
<dbReference type="GO" id="GO:0050081">
    <property type="term" value="F:maltose-6'-phosphate glucosidase activity"/>
    <property type="evidence" value="ECO:0007669"/>
    <property type="project" value="UniProtKB-EC"/>
</dbReference>
<dbReference type="GO" id="GO:0046872">
    <property type="term" value="F:metal ion binding"/>
    <property type="evidence" value="ECO:0007669"/>
    <property type="project" value="UniProtKB-KW"/>
</dbReference>
<dbReference type="GO" id="GO:0016616">
    <property type="term" value="F:oxidoreductase activity, acting on the CH-OH group of donors, NAD or NADP as acceptor"/>
    <property type="evidence" value="ECO:0007669"/>
    <property type="project" value="InterPro"/>
</dbReference>
<dbReference type="GO" id="GO:0005975">
    <property type="term" value="P:carbohydrate metabolic process"/>
    <property type="evidence" value="ECO:0007669"/>
    <property type="project" value="InterPro"/>
</dbReference>
<dbReference type="CDD" id="cd05298">
    <property type="entry name" value="GH4_GlvA_pagL_like"/>
    <property type="match status" value="1"/>
</dbReference>
<dbReference type="Gene3D" id="3.90.110.10">
    <property type="entry name" value="Lactate dehydrogenase/glycoside hydrolase, family 4, C-terminal"/>
    <property type="match status" value="1"/>
</dbReference>
<dbReference type="Gene3D" id="3.40.50.720">
    <property type="entry name" value="NAD(P)-binding Rossmann-like Domain"/>
    <property type="match status" value="1"/>
</dbReference>
<dbReference type="InterPro" id="IPR019802">
    <property type="entry name" value="GlycHydrolase_4_CS"/>
</dbReference>
<dbReference type="InterPro" id="IPR001088">
    <property type="entry name" value="Glyco_hydro_4"/>
</dbReference>
<dbReference type="InterPro" id="IPR022616">
    <property type="entry name" value="Glyco_hydro_4_C"/>
</dbReference>
<dbReference type="InterPro" id="IPR015955">
    <property type="entry name" value="Lactate_DH/Glyco_Ohase_4_C"/>
</dbReference>
<dbReference type="InterPro" id="IPR036291">
    <property type="entry name" value="NAD(P)-bd_dom_sf"/>
</dbReference>
<dbReference type="PANTHER" id="PTHR32092">
    <property type="entry name" value="6-PHOSPHO-BETA-GLUCOSIDASE-RELATED"/>
    <property type="match status" value="1"/>
</dbReference>
<dbReference type="PANTHER" id="PTHR32092:SF14">
    <property type="entry name" value="MALTOSE-6'-PHOSPHATE GLUCOSIDASE"/>
    <property type="match status" value="1"/>
</dbReference>
<dbReference type="Pfam" id="PF02056">
    <property type="entry name" value="Glyco_hydro_4"/>
    <property type="match status" value="1"/>
</dbReference>
<dbReference type="Pfam" id="PF11975">
    <property type="entry name" value="Glyco_hydro_4C"/>
    <property type="match status" value="1"/>
</dbReference>
<dbReference type="PRINTS" id="PR00732">
    <property type="entry name" value="GLHYDRLASE4"/>
</dbReference>
<dbReference type="SUPFAM" id="SSF56327">
    <property type="entry name" value="LDH C-terminal domain-like"/>
    <property type="match status" value="1"/>
</dbReference>
<dbReference type="SUPFAM" id="SSF51735">
    <property type="entry name" value="NAD(P)-binding Rossmann-fold domains"/>
    <property type="match status" value="1"/>
</dbReference>
<dbReference type="PROSITE" id="PS01324">
    <property type="entry name" value="GLYCOSYL_HYDROL_F4"/>
    <property type="match status" value="1"/>
</dbReference>
<protein>
    <recommendedName>
        <fullName>6-phospho-alpha-glucosidase 1</fullName>
        <ecNumber>3.2.1.122</ecNumber>
    </recommendedName>
</protein>
<comment type="function">
    <text evidence="2">Is probably involved in the catabolism of alpha-glycosides accumulated via a phosphoenolpyruvate-dependent phosphotransferase system (PEP-PTS). Hydrolyzes a wide variety of 6-phospho-alpha-D-glucosides including the five isomeric derivatives of sucrose, i.e. trehalulose-6'-phosphate, turanose-6'-phosphate, maltulose-6'-phosphate, leucrose-6'-phosphate, and palatinose-6'-phosphate, but is not active on sucrose-6-phosphate. Can also hydrolyze maltose-6'-phosphate and methyl-alpha-glucose-6-phosphate, and poorly, trehalose-6-phosphate. Fails to hydrolyze beta-O-linked phosphorylated disaccharides such as cellobiose-6'-phosphate and gentiobiose-6'-phosphate. Does not seem to be involved in maltose catabolism.</text>
</comment>
<comment type="catalytic activity">
    <reaction evidence="2">
        <text>alpha-maltose 6'-phosphate + H2O = D-glucose 6-phosphate + D-glucose</text>
        <dbReference type="Rhea" id="RHEA:20421"/>
        <dbReference type="ChEBI" id="CHEBI:4167"/>
        <dbReference type="ChEBI" id="CHEBI:15377"/>
        <dbReference type="ChEBI" id="CHEBI:57478"/>
        <dbReference type="ChEBI" id="CHEBI:61548"/>
        <dbReference type="EC" id="3.2.1.122"/>
    </reaction>
</comment>
<comment type="cofactor">
    <cofactor evidence="2">
        <name>Mn(2+)</name>
        <dbReference type="ChEBI" id="CHEBI:29035"/>
    </cofactor>
    <cofactor evidence="2">
        <name>Co(2+)</name>
        <dbReference type="ChEBI" id="CHEBI:48828"/>
    </cofactor>
    <cofactor evidence="2">
        <name>Ni(2+)</name>
        <dbReference type="ChEBI" id="CHEBI:49786"/>
    </cofactor>
    <cofactor evidence="2">
        <name>Fe(2+)</name>
        <dbReference type="ChEBI" id="CHEBI:29033"/>
    </cofactor>
    <cofactor evidence="2">
        <name>Mg(2+)</name>
        <dbReference type="ChEBI" id="CHEBI:18420"/>
    </cofactor>
    <text evidence="2">Binds 1 divalent metal ion per subunit. Mn(2+) is the most efficient metal, but can also use Co(2+), Ni(2+) and Fe(2+), and to a lesser extent Mg(2+). Cannot use Zn(2+).</text>
</comment>
<comment type="cofactor">
    <cofactor evidence="2">
        <name>NAD(+)</name>
        <dbReference type="ChEBI" id="CHEBI:57540"/>
    </cofactor>
    <text evidence="2">Binds 1 NAD(+) per subunit.</text>
</comment>
<comment type="activity regulation">
    <text evidence="2">Is inhibited by EDTA in vitro.</text>
</comment>
<comment type="subunit">
    <text evidence="2">Homodimer. May also form homotetramer.</text>
</comment>
<comment type="induction">
    <text evidence="2">By maltulose, leucrose and palatinose, but not by maltose, glucose or sucrose.</text>
</comment>
<comment type="similarity">
    <text evidence="3">Belongs to the glycosyl hydrolase 4 family.</text>
</comment>